<keyword id="KW-0027">Amidation</keyword>
<keyword id="KW-0903">Direct protein sequencing</keyword>
<keyword id="KW-0372">Hormone</keyword>
<keyword id="KW-0527">Neuropeptide</keyword>
<keyword id="KW-0873">Pyrrolidone carboxylic acid</keyword>
<keyword id="KW-0964">Secreted</keyword>
<protein>
    <recommendedName>
        <fullName evidence="1">Hypertrehalosaemic factor</fullName>
    </recommendedName>
    <alternativeName>
        <fullName evidence="4">Adipokinetic hormone 1</fullName>
        <shortName evidence="4">PycSu-AKH-1</shortName>
    </alternativeName>
    <alternativeName>
        <fullName evidence="1">Hypertrehalosaemic neuropeptide</fullName>
    </alternativeName>
</protein>
<sequence length="9" mass="991">QVNFSPGWG</sequence>
<name>HTF_PYCSU</name>
<reference evidence="5" key="1">
    <citation type="journal article" date="2009" name="BMC Evol. Biol.">
        <title>A proteomic approach for studying insect phylogeny: CAPA peptides of ancient insect taxa (Dictyoptera, Blattoptera) as a test case.</title>
        <authorList>
            <person name="Roth S."/>
            <person name="Fromm B."/>
            <person name="Gaede G."/>
            <person name="Predel R."/>
        </authorList>
    </citation>
    <scope>PROTEIN SEQUENCE</scope>
    <scope>PYROGLUTAMATE FORMATION AT GLN-1</scope>
    <scope>AMIDATION AT GLY-9</scope>
    <source>
        <tissue evidence="3">Corpora cardiaca</tissue>
    </source>
</reference>
<accession>P85764</accession>
<feature type="peptide" id="PRO_0000378671" description="Hypertrehalosaemic factor" evidence="3">
    <location>
        <begin position="1"/>
        <end position="9"/>
    </location>
</feature>
<feature type="modified residue" description="Pyrrolidone carboxylic acid" evidence="3">
    <location>
        <position position="1"/>
    </location>
</feature>
<feature type="modified residue" description="Glycine amide" evidence="3">
    <location>
        <position position="9"/>
    </location>
</feature>
<dbReference type="GO" id="GO:0005576">
    <property type="term" value="C:extracellular region"/>
    <property type="evidence" value="ECO:0007669"/>
    <property type="project" value="UniProtKB-SubCell"/>
</dbReference>
<dbReference type="GO" id="GO:0005179">
    <property type="term" value="F:hormone activity"/>
    <property type="evidence" value="ECO:0007669"/>
    <property type="project" value="UniProtKB-KW"/>
</dbReference>
<dbReference type="GO" id="GO:0007218">
    <property type="term" value="P:neuropeptide signaling pathway"/>
    <property type="evidence" value="ECO:0007669"/>
    <property type="project" value="UniProtKB-KW"/>
</dbReference>
<dbReference type="InterPro" id="IPR002047">
    <property type="entry name" value="Adipokinetic_hormone_CS"/>
</dbReference>
<dbReference type="PROSITE" id="PS00256">
    <property type="entry name" value="AKH"/>
    <property type="match status" value="1"/>
</dbReference>
<comment type="function">
    <text evidence="5">Hypertrehalosaemic factors are neuropeptides that elevate the level of trehalose in the hemolymph (trehalose is the major carbohydrate in the hemolymph of insects).</text>
</comment>
<comment type="subcellular location">
    <subcellularLocation>
        <location evidence="5">Secreted</location>
    </subcellularLocation>
</comment>
<comment type="similarity">
    <text evidence="2">Belongs to the AKH/HRTH/RPCH family.</text>
</comment>
<organism>
    <name type="scientific">Pycnoscelus surinamensis</name>
    <name type="common">Surinam cockroach</name>
    <name type="synonym">Blatta surinamensis</name>
    <dbReference type="NCBI Taxonomy" id="36961"/>
    <lineage>
        <taxon>Eukaryota</taxon>
        <taxon>Metazoa</taxon>
        <taxon>Ecdysozoa</taxon>
        <taxon>Arthropoda</taxon>
        <taxon>Hexapoda</taxon>
        <taxon>Insecta</taxon>
        <taxon>Pterygota</taxon>
        <taxon>Neoptera</taxon>
        <taxon>Polyneoptera</taxon>
        <taxon>Dictyoptera</taxon>
        <taxon>Blattodea</taxon>
        <taxon>Blaberoidea</taxon>
        <taxon>Blaberidae</taxon>
        <taxon>Pycnoscelinae</taxon>
        <taxon>Pycnoscelus</taxon>
    </lineage>
</organism>
<evidence type="ECO:0000250" key="1">
    <source>
        <dbReference type="UniProtKB" id="P67790"/>
    </source>
</evidence>
<evidence type="ECO:0000255" key="2"/>
<evidence type="ECO:0000269" key="3">
    <source>
    </source>
</evidence>
<evidence type="ECO:0000303" key="4">
    <source>
    </source>
</evidence>
<evidence type="ECO:0000305" key="5"/>
<proteinExistence type="evidence at protein level"/>